<comment type="function">
    <text evidence="1 2">Component of the adaptor complexes which link clathrin to receptors in coated vesicles. Clathrin-associated protein complexes are believed to interact with the cytoplasmic tails of membrane proteins, leading to their selection and concentration. AP50 is a subunit of the plasma membrane adaptor. The complex binds polyphosphoinositide-containing lipids.</text>
</comment>
<comment type="subunit">
    <text evidence="2">Adaptor protein complex 2 (AP-2) is a heterotetramer composed of two large adaptins (alpha-type subunit and beta-type subunit), a medium adaptin (mu-type subunit) and a small adaptin (sigma-type subunit).</text>
</comment>
<comment type="subcellular location">
    <subcellularLocation>
        <location evidence="2">Cell membrane</location>
    </subcellularLocation>
    <subcellularLocation>
        <location evidence="2">Membrane</location>
        <location evidence="2">Coated pit</location>
        <topology evidence="2">Peripheral membrane protein</topology>
        <orientation evidence="2">Cytoplasmic side</orientation>
    </subcellularLocation>
</comment>
<comment type="similarity">
    <text evidence="4">Belongs to the adaptor complexes medium subunit family.</text>
</comment>
<evidence type="ECO:0000250" key="1">
    <source>
        <dbReference type="UniProtKB" id="P84092"/>
    </source>
</evidence>
<evidence type="ECO:0000250" key="2">
    <source>
        <dbReference type="UniProtKB" id="Q96CW1"/>
    </source>
</evidence>
<evidence type="ECO:0000255" key="3">
    <source>
        <dbReference type="PROSITE-ProRule" id="PRU00404"/>
    </source>
</evidence>
<evidence type="ECO:0000305" key="4"/>
<sequence length="435" mass="49685">MIGGLFIYNHKGEVLISRVYRDDIGRNAVDAFRVNVIHARQQVRSPVTNIARTSFFHVKRSNIWLAAVTKQNVNAAMVFEFLYKMCDVMTAYFGKISEENIKNNFVLIYELLDEILDFGYPQNSETGALKTFITQQGIKSQHQTKEEQSQITSQVTGQIGWRREGIKYRRNELFLDVLESVNLLMSPQGQVLSAHVSGRVVMKSYLSGMPECKFGMNDKIVIEKQGKGTADETGKTGKQSIAIDDCTFHQCVRLSKFDSERSISFIPPDGEYELMRYRTTKDIILPFRVIPLVREVGRTKLEVKVVIKSNFKPSLLAQKIEVRIPTPLNTSGVQVICMKGKAKYKASENAIVWKIKRMAGMKESQISAEIELLPTNDKKKWARPPISMNFEVPFAPSGLKVRYLKVFEPKLNYSDHDVIKWVRYIGRSGIYETRC</sequence>
<feature type="chain" id="PRO_0000318896" description="AP-2 complex subunit mu">
    <location>
        <begin position="1"/>
        <end position="435"/>
    </location>
</feature>
<feature type="domain" description="MHD" evidence="3">
    <location>
        <begin position="170"/>
        <end position="434"/>
    </location>
</feature>
<feature type="binding site" evidence="1">
    <location>
        <position position="341"/>
    </location>
    <ligand>
        <name>a 1,2-diacyl-sn-glycero-3-phospho-(1D-myo-inositol-3,4,5-trisphosphate)</name>
        <dbReference type="ChEBI" id="CHEBI:57836"/>
    </ligand>
</feature>
<feature type="binding site" evidence="1">
    <location>
        <position position="345"/>
    </location>
    <ligand>
        <name>a 1,2-diacyl-sn-glycero-3-phospho-(1D-myo-inositol-3,4,5-trisphosphate)</name>
        <dbReference type="ChEBI" id="CHEBI:57836"/>
    </ligand>
</feature>
<feature type="binding site" evidence="1">
    <location>
        <position position="354"/>
    </location>
    <ligand>
        <name>a 1,2-diacyl-sn-glycero-3-phospho-(1D-myo-inositol-3,4,5-trisphosphate)</name>
        <dbReference type="ChEBI" id="CHEBI:57836"/>
    </ligand>
</feature>
<proteinExistence type="evidence at transcript level"/>
<organism>
    <name type="scientific">Xenopus laevis</name>
    <name type="common">African clawed frog</name>
    <dbReference type="NCBI Taxonomy" id="8355"/>
    <lineage>
        <taxon>Eukaryota</taxon>
        <taxon>Metazoa</taxon>
        <taxon>Chordata</taxon>
        <taxon>Craniata</taxon>
        <taxon>Vertebrata</taxon>
        <taxon>Euteleostomi</taxon>
        <taxon>Amphibia</taxon>
        <taxon>Batrachia</taxon>
        <taxon>Anura</taxon>
        <taxon>Pipoidea</taxon>
        <taxon>Pipidae</taxon>
        <taxon>Xenopodinae</taxon>
        <taxon>Xenopus</taxon>
        <taxon>Xenopus</taxon>
    </lineage>
</organism>
<dbReference type="EMBL" id="BC047969">
    <property type="protein sequence ID" value="AAH47969.1"/>
    <property type="molecule type" value="mRNA"/>
</dbReference>
<dbReference type="EMBL" id="BC072057">
    <property type="protein sequence ID" value="AAH72057.1"/>
    <property type="molecule type" value="mRNA"/>
</dbReference>
<dbReference type="RefSeq" id="NP_001080803.1">
    <property type="nucleotide sequence ID" value="NM_001087334.1"/>
</dbReference>
<dbReference type="RefSeq" id="NP_001085100.1">
    <property type="nucleotide sequence ID" value="NM_001091631.1"/>
</dbReference>
<dbReference type="RefSeq" id="XP_018117167.1">
    <property type="nucleotide sequence ID" value="XM_018261678.1"/>
</dbReference>
<dbReference type="SMR" id="Q801Q8"/>
<dbReference type="BioGRID" id="101537">
    <property type="interactions" value="1"/>
</dbReference>
<dbReference type="BioGRID" id="98739">
    <property type="interactions" value="2"/>
</dbReference>
<dbReference type="IntAct" id="Q801Q8">
    <property type="interactions" value="1"/>
</dbReference>
<dbReference type="DNASU" id="380497"/>
<dbReference type="DNASU" id="432171"/>
<dbReference type="GeneID" id="380497"/>
<dbReference type="GeneID" id="432171"/>
<dbReference type="KEGG" id="xla:380497"/>
<dbReference type="KEGG" id="xla:432171"/>
<dbReference type="AGR" id="Xenbase:XB-GENE-6253608"/>
<dbReference type="CTD" id="380497"/>
<dbReference type="CTD" id="432171"/>
<dbReference type="Xenbase" id="XB-GENE-6253608">
    <property type="gene designation" value="ap2m1.L"/>
</dbReference>
<dbReference type="OMA" id="DIGWALI"/>
<dbReference type="OrthoDB" id="10259133at2759"/>
<dbReference type="Proteomes" id="UP000186698">
    <property type="component" value="Chromosome 5L"/>
</dbReference>
<dbReference type="Proteomes" id="UP000186698">
    <property type="component" value="Chromosome 5S"/>
</dbReference>
<dbReference type="Bgee" id="380497">
    <property type="expression patterns" value="Expressed in brain and 19 other cell types or tissues"/>
</dbReference>
<dbReference type="GO" id="GO:0030122">
    <property type="term" value="C:AP-2 adaptor complex"/>
    <property type="evidence" value="ECO:0000318"/>
    <property type="project" value="GO_Central"/>
</dbReference>
<dbReference type="GO" id="GO:0031410">
    <property type="term" value="C:cytoplasmic vesicle"/>
    <property type="evidence" value="ECO:0000318"/>
    <property type="project" value="GO_Central"/>
</dbReference>
<dbReference type="GO" id="GO:0035615">
    <property type="term" value="F:clathrin adaptor activity"/>
    <property type="evidence" value="ECO:0000318"/>
    <property type="project" value="GO_Central"/>
</dbReference>
<dbReference type="GO" id="GO:0008289">
    <property type="term" value="F:lipid binding"/>
    <property type="evidence" value="ECO:0007669"/>
    <property type="project" value="UniProtKB-KW"/>
</dbReference>
<dbReference type="GO" id="GO:0072583">
    <property type="term" value="P:clathrin-dependent endocytosis"/>
    <property type="evidence" value="ECO:0000318"/>
    <property type="project" value="GO_Central"/>
</dbReference>
<dbReference type="GO" id="GO:0006886">
    <property type="term" value="P:intracellular protein transport"/>
    <property type="evidence" value="ECO:0007669"/>
    <property type="project" value="InterPro"/>
</dbReference>
<dbReference type="CDD" id="cd09251">
    <property type="entry name" value="AP-2_Mu2_Cterm"/>
    <property type="match status" value="1"/>
</dbReference>
<dbReference type="CDD" id="cd14836">
    <property type="entry name" value="AP2_Mu_N"/>
    <property type="match status" value="1"/>
</dbReference>
<dbReference type="FunFam" id="2.60.40.1170:FF:000008">
    <property type="entry name" value="AP-2 complex subunit mu isoform 2"/>
    <property type="match status" value="1"/>
</dbReference>
<dbReference type="FunFam" id="3.30.450.60:FF:000002">
    <property type="entry name" value="AP-2 complex subunit mu, putative"/>
    <property type="match status" value="1"/>
</dbReference>
<dbReference type="Gene3D" id="3.30.450.60">
    <property type="match status" value="1"/>
</dbReference>
<dbReference type="Gene3D" id="2.60.40.1170">
    <property type="entry name" value="Mu homology domain, subdomain B"/>
    <property type="match status" value="2"/>
</dbReference>
<dbReference type="InterPro" id="IPR050431">
    <property type="entry name" value="Adaptor_comp_med_subunit"/>
</dbReference>
<dbReference type="InterPro" id="IPR036168">
    <property type="entry name" value="AP2_Mu_C_sf"/>
</dbReference>
<dbReference type="InterPro" id="IPR043532">
    <property type="entry name" value="AP2_Mu_N"/>
</dbReference>
<dbReference type="InterPro" id="IPR022775">
    <property type="entry name" value="AP_mu_sigma_su"/>
</dbReference>
<dbReference type="InterPro" id="IPR001392">
    <property type="entry name" value="Clathrin_mu"/>
</dbReference>
<dbReference type="InterPro" id="IPR018240">
    <property type="entry name" value="Clathrin_mu_CS"/>
</dbReference>
<dbReference type="InterPro" id="IPR011012">
    <property type="entry name" value="Longin-like_dom_sf"/>
</dbReference>
<dbReference type="InterPro" id="IPR028565">
    <property type="entry name" value="MHD"/>
</dbReference>
<dbReference type="InterPro" id="IPR043512">
    <property type="entry name" value="Mu2_C"/>
</dbReference>
<dbReference type="PANTHER" id="PTHR10529">
    <property type="entry name" value="AP COMPLEX SUBUNIT MU"/>
    <property type="match status" value="1"/>
</dbReference>
<dbReference type="Pfam" id="PF00928">
    <property type="entry name" value="Adap_comp_sub"/>
    <property type="match status" value="1"/>
</dbReference>
<dbReference type="Pfam" id="PF01217">
    <property type="entry name" value="Clat_adaptor_s"/>
    <property type="match status" value="1"/>
</dbReference>
<dbReference type="PIRSF" id="PIRSF005992">
    <property type="entry name" value="Clathrin_mu"/>
    <property type="match status" value="1"/>
</dbReference>
<dbReference type="PRINTS" id="PR00314">
    <property type="entry name" value="CLATHRINADPT"/>
</dbReference>
<dbReference type="SUPFAM" id="SSF49447">
    <property type="entry name" value="Second domain of Mu2 adaptin subunit (ap50) of ap2 adaptor"/>
    <property type="match status" value="1"/>
</dbReference>
<dbReference type="SUPFAM" id="SSF64356">
    <property type="entry name" value="SNARE-like"/>
    <property type="match status" value="1"/>
</dbReference>
<dbReference type="PROSITE" id="PS00990">
    <property type="entry name" value="CLAT_ADAPTOR_M_1"/>
    <property type="match status" value="1"/>
</dbReference>
<dbReference type="PROSITE" id="PS00991">
    <property type="entry name" value="CLAT_ADAPTOR_M_2"/>
    <property type="match status" value="1"/>
</dbReference>
<dbReference type="PROSITE" id="PS51072">
    <property type="entry name" value="MHD"/>
    <property type="match status" value="1"/>
</dbReference>
<reference key="1">
    <citation type="submission" date="2003-03" db="EMBL/GenBank/DDBJ databases">
        <authorList>
            <consortium name="NIH - Xenopus Gene Collection (XGC) project"/>
        </authorList>
    </citation>
    <scope>NUCLEOTIDE SEQUENCE [LARGE SCALE MRNA]</scope>
    <source>
        <tissue>Embryo</tissue>
    </source>
</reference>
<protein>
    <recommendedName>
        <fullName>AP-2 complex subunit mu</fullName>
    </recommendedName>
    <alternativeName>
        <fullName>AP-2 mu chain</fullName>
    </alternativeName>
    <alternativeName>
        <fullName>Clathrin assembly protein complex 2 mu medium chain</fullName>
    </alternativeName>
    <alternativeName>
        <fullName>Clathrin coat assembly protein AP50</fullName>
    </alternativeName>
    <alternativeName>
        <fullName>Clathrin coat-associated protein AP50</fullName>
    </alternativeName>
    <alternativeName>
        <fullName>Mu2-adaptin</fullName>
    </alternativeName>
    <alternativeName>
        <fullName>Plasma membrane adaptor AP-2 50 kDa protein</fullName>
    </alternativeName>
</protein>
<keyword id="KW-1003">Cell membrane</keyword>
<keyword id="KW-0168">Coated pit</keyword>
<keyword id="KW-0254">Endocytosis</keyword>
<keyword id="KW-0446">Lipid-binding</keyword>
<keyword id="KW-0472">Membrane</keyword>
<keyword id="KW-0653">Protein transport</keyword>
<keyword id="KW-1185">Reference proteome</keyword>
<keyword id="KW-0813">Transport</keyword>
<name>AP2M1_XENLA</name>
<gene>
    <name type="primary">ap2m1</name>
</gene>
<accession>Q801Q8</accession>